<proteinExistence type="predicted"/>
<protein>
    <recommendedName>
        <fullName>Uncharacterized protein TP_0484</fullName>
    </recommendedName>
</protein>
<keyword id="KW-0472">Membrane</keyword>
<keyword id="KW-1185">Reference proteome</keyword>
<keyword id="KW-0812">Transmembrane</keyword>
<keyword id="KW-1133">Transmembrane helix</keyword>
<accession>O83497</accession>
<comment type="subcellular location">
    <subcellularLocation>
        <location evidence="2">Membrane</location>
        <topology evidence="2">Single-pass membrane protein</topology>
    </subcellularLocation>
</comment>
<gene>
    <name type="ordered locus">TP_0484</name>
</gene>
<name>Y484_TREPA</name>
<reference key="1">
    <citation type="journal article" date="1998" name="Science">
        <title>Complete genome sequence of Treponema pallidum, the syphilis spirochete.</title>
        <authorList>
            <person name="Fraser C.M."/>
            <person name="Norris S.J."/>
            <person name="Weinstock G.M."/>
            <person name="White O."/>
            <person name="Sutton G.G."/>
            <person name="Dodson R.J."/>
            <person name="Gwinn M.L."/>
            <person name="Hickey E.K."/>
            <person name="Clayton R.A."/>
            <person name="Ketchum K.A."/>
            <person name="Sodergren E."/>
            <person name="Hardham J.M."/>
            <person name="McLeod M.P."/>
            <person name="Salzberg S.L."/>
            <person name="Peterson J.D."/>
            <person name="Khalak H.G."/>
            <person name="Richardson D.L."/>
            <person name="Howell J.K."/>
            <person name="Chidambaram M."/>
            <person name="Utterback T.R."/>
            <person name="McDonald L.A."/>
            <person name="Artiach P."/>
            <person name="Bowman C."/>
            <person name="Cotton M.D."/>
            <person name="Fujii C."/>
            <person name="Garland S.A."/>
            <person name="Hatch B."/>
            <person name="Horst K."/>
            <person name="Roberts K.M."/>
            <person name="Sandusky M."/>
            <person name="Weidman J.F."/>
            <person name="Smith H.O."/>
            <person name="Venter J.C."/>
        </authorList>
    </citation>
    <scope>NUCLEOTIDE SEQUENCE [LARGE SCALE GENOMIC DNA]</scope>
    <source>
        <strain>Nichols</strain>
    </source>
</reference>
<sequence length="671" mass="75838">MTDRRRSMSCVHFFPLKSRGFLPTLTSKKRSVKLSKQDATVTVVILLLILLLGWGYSRALRLSQGKGNPIGRVFFYKKTATRKKNNQALWLKLKDGVPVYHRDVLRTTTGSEAVIVFTDNSRLDIAENTMVRISHTGMKKKDVRLVTGAIRYARAAGNPAAHTVHVGKTTISLSGDGQVNVRGGERDSTVEIARGEALLHDAQGQTLPLQTFTQLATSREDGTVRILHPTFVPLLPDQDALLLTAEHTRSVGFVWLGDATTVQPSVRLQISRYADFSVIETERKLTLPHEANASRTTFKTSERLGEGRWFWRLVPQNGTASAPRSFSVRRARKVMLHTPRAQAVLSYRDAIPPTLFSWTSVEDVEQYRLLLSSRADFSADVKTFSLRTPEISVPGLGEGTYFWKVVPRFDEGIEDPVFASEVGTFSIKQGKELHAPVALFPAEDEVLEHADRENRMVIFTCEPIPEARRYVWTVKNMDANASPLVTTTSVPFLTVPMRSLRARLQEGTYQWQVAWETRRSDRSPYSALRAFTVIEGMHAWEEEPETRDLIALRAPSFVLRDMPALITEKYLLQHRALRCKWTAVHNAQRYTVTLKNKKTDAVLQTATTTGVEFSFTNLAHLEEGSFHWVIQAHTEQEGYEPASAQVVRAFTIRVSELERPRAKEIVHYEYH</sequence>
<evidence type="ECO:0000255" key="1"/>
<evidence type="ECO:0000305" key="2"/>
<organism>
    <name type="scientific">Treponema pallidum (strain Nichols)</name>
    <dbReference type="NCBI Taxonomy" id="243276"/>
    <lineage>
        <taxon>Bacteria</taxon>
        <taxon>Pseudomonadati</taxon>
        <taxon>Spirochaetota</taxon>
        <taxon>Spirochaetia</taxon>
        <taxon>Spirochaetales</taxon>
        <taxon>Treponemataceae</taxon>
        <taxon>Treponema</taxon>
    </lineage>
</organism>
<feature type="chain" id="PRO_0000202265" description="Uncharacterized protein TP_0484">
    <location>
        <begin position="1"/>
        <end position="671"/>
    </location>
</feature>
<feature type="transmembrane region" description="Helical" evidence="1">
    <location>
        <begin position="39"/>
        <end position="56"/>
    </location>
</feature>
<dbReference type="EMBL" id="AE000520">
    <property type="protein sequence ID" value="AAC65473.1"/>
    <property type="molecule type" value="Genomic_DNA"/>
</dbReference>
<dbReference type="PIR" id="B71320">
    <property type="entry name" value="B71320"/>
</dbReference>
<dbReference type="RefSeq" id="WP_010881933.1">
    <property type="nucleotide sequence ID" value="NC_021490.2"/>
</dbReference>
<dbReference type="IntAct" id="O83497">
    <property type="interactions" value="5"/>
</dbReference>
<dbReference type="STRING" id="243276.TP_0484"/>
<dbReference type="EnsemblBacteria" id="AAC65473">
    <property type="protein sequence ID" value="AAC65473"/>
    <property type="gene ID" value="TP_0484"/>
</dbReference>
<dbReference type="KEGG" id="tpa:TP_0484"/>
<dbReference type="KEGG" id="tpw:TPANIC_0484"/>
<dbReference type="eggNOG" id="COG4254">
    <property type="taxonomic scope" value="Bacteria"/>
</dbReference>
<dbReference type="HOGENOM" id="CLU_409343_0_0_12"/>
<dbReference type="OrthoDB" id="340531at2"/>
<dbReference type="Proteomes" id="UP000000811">
    <property type="component" value="Chromosome"/>
</dbReference>
<dbReference type="GO" id="GO:0016020">
    <property type="term" value="C:membrane"/>
    <property type="evidence" value="ECO:0007669"/>
    <property type="project" value="UniProtKB-SubCell"/>
</dbReference>
<dbReference type="Gene3D" id="2.60.40.10">
    <property type="entry name" value="Immunoglobulins"/>
    <property type="match status" value="3"/>
</dbReference>
<dbReference type="InterPro" id="IPR006860">
    <property type="entry name" value="FecR"/>
</dbReference>
<dbReference type="InterPro" id="IPR013783">
    <property type="entry name" value="Ig-like_fold"/>
</dbReference>
<dbReference type="Pfam" id="PF04773">
    <property type="entry name" value="FecR"/>
    <property type="match status" value="1"/>
</dbReference>